<dbReference type="EMBL" id="X60109">
    <property type="protein sequence ID" value="CAA42704.1"/>
    <property type="molecule type" value="Genomic_DNA"/>
</dbReference>
<dbReference type="EMBL" id="AF158101">
    <property type="protein sequence ID" value="AAD42447.1"/>
    <property type="molecule type" value="Genomic_DNA"/>
</dbReference>
<dbReference type="PIR" id="S27146">
    <property type="entry name" value="S27146"/>
</dbReference>
<dbReference type="RefSeq" id="NP_049820.1">
    <property type="nucleotide sequence ID" value="NC_000866.4"/>
</dbReference>
<dbReference type="GeneID" id="1258670"/>
<dbReference type="KEGG" id="vg:1258670"/>
<dbReference type="OrthoDB" id="17248at10239"/>
<dbReference type="Proteomes" id="UP000009087">
    <property type="component" value="Segment"/>
</dbReference>
<protein>
    <recommendedName>
        <fullName>Uncharacterized 10.8 kDa protein in Gp30-rIII intergenic region</fullName>
    </recommendedName>
</protein>
<reference key="1">
    <citation type="journal article" date="1992" name="DNA Seq.">
        <title>The nucleotide sequence between genes 31 and 30 of bacteriophage T4.</title>
        <authorList>
            <person name="Nivinskas R."/>
            <person name="Zajanckauskaite A."/>
            <person name="Raudonikiene A."/>
            <person name="Viteniene I."/>
        </authorList>
    </citation>
    <scope>NUCLEOTIDE SEQUENCE [GENOMIC DNA]</scope>
</reference>
<reference key="2">
    <citation type="journal article" date="2003" name="Microbiol. Mol. Biol. Rev.">
        <title>Bacteriophage T4 genome.</title>
        <authorList>
            <person name="Miller E.S."/>
            <person name="Kutter E."/>
            <person name="Mosig G."/>
            <person name="Arisaka F."/>
            <person name="Kunisawa T."/>
            <person name="Ruger W."/>
        </authorList>
    </citation>
    <scope>NUCLEOTIDE SEQUENCE [LARGE SCALE GENOMIC DNA]</scope>
</reference>
<sequence>MFMTTYFDTRKNFCEVVFSKAPKDLPAHLQLTSESIKNYVDVVCPLEFRTVNGRDTLAITKLNREIDIDPSIAREINISDIGGGNVKSHGFQMRF</sequence>
<proteinExistence type="predicted"/>
<name>Y12K_BPT4</name>
<organism>
    <name type="scientific">Enterobacteria phage T4</name>
    <name type="common">Bacteriophage T4</name>
    <dbReference type="NCBI Taxonomy" id="10665"/>
    <lineage>
        <taxon>Viruses</taxon>
        <taxon>Duplodnaviria</taxon>
        <taxon>Heunggongvirae</taxon>
        <taxon>Uroviricota</taxon>
        <taxon>Caudoviricetes</taxon>
        <taxon>Straboviridae</taxon>
        <taxon>Tevenvirinae</taxon>
        <taxon>Tequatrovirus</taxon>
    </lineage>
</organism>
<feature type="chain" id="PRO_0000165171" description="Uncharacterized 10.8 kDa protein in Gp30-rIII intergenic region">
    <location>
        <begin position="1"/>
        <end position="95"/>
    </location>
</feature>
<accession>Q02407</accession>
<gene>
    <name type="primary">y12K</name>
    <name type="synonym">30.6</name>
</gene>
<keyword id="KW-1185">Reference proteome</keyword>
<organismHost>
    <name type="scientific">Escherichia coli</name>
    <dbReference type="NCBI Taxonomy" id="562"/>
</organismHost>